<gene>
    <name evidence="2" type="primary">purD</name>
    <name type="ordered locus">mlr7447</name>
</gene>
<keyword id="KW-0067">ATP-binding</keyword>
<keyword id="KW-0436">Ligase</keyword>
<keyword id="KW-0460">Magnesium</keyword>
<keyword id="KW-0464">Manganese</keyword>
<keyword id="KW-0479">Metal-binding</keyword>
<keyword id="KW-0547">Nucleotide-binding</keyword>
<keyword id="KW-0658">Purine biosynthesis</keyword>
<reference key="1">
    <citation type="journal article" date="2000" name="DNA Res.">
        <title>Complete genome structure of the nitrogen-fixing symbiotic bacterium Mesorhizobium loti.</title>
        <authorList>
            <person name="Kaneko T."/>
            <person name="Nakamura Y."/>
            <person name="Sato S."/>
            <person name="Asamizu E."/>
            <person name="Kato T."/>
            <person name="Sasamoto S."/>
            <person name="Watanabe A."/>
            <person name="Idesawa K."/>
            <person name="Ishikawa A."/>
            <person name="Kawashima K."/>
            <person name="Kimura T."/>
            <person name="Kishida Y."/>
            <person name="Kiyokawa C."/>
            <person name="Kohara M."/>
            <person name="Matsumoto M."/>
            <person name="Matsuno A."/>
            <person name="Mochizuki Y."/>
            <person name="Nakayama S."/>
            <person name="Nakazaki N."/>
            <person name="Shimpo S."/>
            <person name="Sugimoto M."/>
            <person name="Takeuchi C."/>
            <person name="Yamada M."/>
            <person name="Tabata S."/>
        </authorList>
    </citation>
    <scope>NUCLEOTIDE SEQUENCE [LARGE SCALE GENOMIC DNA]</scope>
    <source>
        <strain>LMG 29417 / CECT 9101 / MAFF 303099</strain>
    </source>
</reference>
<evidence type="ECO:0000250" key="1"/>
<evidence type="ECO:0000255" key="2">
    <source>
        <dbReference type="HAMAP-Rule" id="MF_00138"/>
    </source>
</evidence>
<evidence type="ECO:0000256" key="3">
    <source>
        <dbReference type="SAM" id="MobiDB-lite"/>
    </source>
</evidence>
<protein>
    <recommendedName>
        <fullName evidence="2">Phosphoribosylamine--glycine ligase</fullName>
        <ecNumber evidence="2">6.3.4.13</ecNumber>
    </recommendedName>
    <alternativeName>
        <fullName evidence="2">GARS</fullName>
    </alternativeName>
    <alternativeName>
        <fullName evidence="2">Glycinamide ribonucleotide synthetase</fullName>
    </alternativeName>
    <alternativeName>
        <fullName evidence="2">Phosphoribosylglycinamide synthetase</fullName>
    </alternativeName>
</protein>
<organism>
    <name type="scientific">Mesorhizobium japonicum (strain LMG 29417 / CECT 9101 / MAFF 303099)</name>
    <name type="common">Mesorhizobium loti (strain MAFF 303099)</name>
    <dbReference type="NCBI Taxonomy" id="266835"/>
    <lineage>
        <taxon>Bacteria</taxon>
        <taxon>Pseudomonadati</taxon>
        <taxon>Pseudomonadota</taxon>
        <taxon>Alphaproteobacteria</taxon>
        <taxon>Hyphomicrobiales</taxon>
        <taxon>Phyllobacteriaceae</taxon>
        <taxon>Mesorhizobium</taxon>
    </lineage>
</organism>
<comment type="catalytic activity">
    <reaction evidence="2">
        <text>5-phospho-beta-D-ribosylamine + glycine + ATP = N(1)-(5-phospho-beta-D-ribosyl)glycinamide + ADP + phosphate + H(+)</text>
        <dbReference type="Rhea" id="RHEA:17453"/>
        <dbReference type="ChEBI" id="CHEBI:15378"/>
        <dbReference type="ChEBI" id="CHEBI:30616"/>
        <dbReference type="ChEBI" id="CHEBI:43474"/>
        <dbReference type="ChEBI" id="CHEBI:57305"/>
        <dbReference type="ChEBI" id="CHEBI:58681"/>
        <dbReference type="ChEBI" id="CHEBI:143788"/>
        <dbReference type="ChEBI" id="CHEBI:456216"/>
        <dbReference type="EC" id="6.3.4.13"/>
    </reaction>
</comment>
<comment type="cofactor">
    <cofactor evidence="1">
        <name>Mg(2+)</name>
        <dbReference type="ChEBI" id="CHEBI:18420"/>
    </cofactor>
    <cofactor evidence="1">
        <name>Mn(2+)</name>
        <dbReference type="ChEBI" id="CHEBI:29035"/>
    </cofactor>
    <text evidence="1">Binds 1 Mg(2+) or Mn(2+) ion per subunit.</text>
</comment>
<comment type="pathway">
    <text evidence="2">Purine metabolism; IMP biosynthesis via de novo pathway; N(1)-(5-phospho-D-ribosyl)glycinamide from 5-phospho-alpha-D-ribose 1-diphosphate: step 2/2.</text>
</comment>
<comment type="similarity">
    <text evidence="2">Belongs to the GARS family.</text>
</comment>
<feature type="chain" id="PRO_0000151473" description="Phosphoribosylamine--glycine ligase">
    <location>
        <begin position="1"/>
        <end position="425"/>
    </location>
</feature>
<feature type="domain" description="ATP-grasp" evidence="2">
    <location>
        <begin position="107"/>
        <end position="312"/>
    </location>
</feature>
<feature type="region of interest" description="Disordered" evidence="3">
    <location>
        <begin position="214"/>
        <end position="233"/>
    </location>
</feature>
<feature type="binding site" evidence="2">
    <location>
        <begin position="133"/>
        <end position="193"/>
    </location>
    <ligand>
        <name>ATP</name>
        <dbReference type="ChEBI" id="CHEBI:30616"/>
    </ligand>
</feature>
<feature type="binding site" evidence="2">
    <location>
        <position position="282"/>
    </location>
    <ligand>
        <name>Mg(2+)</name>
        <dbReference type="ChEBI" id="CHEBI:18420"/>
    </ligand>
</feature>
<feature type="binding site" evidence="2">
    <location>
        <position position="284"/>
    </location>
    <ligand>
        <name>Mg(2+)</name>
        <dbReference type="ChEBI" id="CHEBI:18420"/>
    </ligand>
</feature>
<proteinExistence type="inferred from homology"/>
<sequence length="425" mass="44487">MNVLLLGSGGREHALAWKIAASPLLTKLYAAPGNPGIGAEAELVKLDITDHAAVTAFCQEKKIDLVVVGPEGPLVAGIADDLRAENIRVFGPSKAAARLEGSKGFTKDLCARYNIPTAAYGRFNDLASAKAYVDQTGAPIVIKADGLAAGKGVTVAMTSDEARAALDACFEGSFGAAGAEVVVEEFMTGEEASFFCLCDGTTALPFGTAQDHKRVGDGDVGPNTGGMGAYSPAPVMTPEMIERTMREIIEPTMRGMAELGAPFAGILFAGLMITDKGPKLIEYNTRFGDPECQVLMMRLKDDLLVLLNAAVDGQLAHTSIRWRDEAALTVVMAARGYPGTPEKGSVIRGVEQAAGEGVQIFHAGTAINGGALVANGGRVLNVTASGATVGEAQKRAYAALDRIDWPDGFCRRDIGWQAVARERAS</sequence>
<accession>Q986A5</accession>
<dbReference type="EC" id="6.3.4.13" evidence="2"/>
<dbReference type="EMBL" id="BA000012">
    <property type="protein sequence ID" value="BAB53548.1"/>
    <property type="molecule type" value="Genomic_DNA"/>
</dbReference>
<dbReference type="RefSeq" id="WP_010914855.1">
    <property type="nucleotide sequence ID" value="NC_002678.2"/>
</dbReference>
<dbReference type="SMR" id="Q986A5"/>
<dbReference type="KEGG" id="mlo:mlr7447"/>
<dbReference type="PATRIC" id="fig|266835.9.peg.5948"/>
<dbReference type="eggNOG" id="COG0151">
    <property type="taxonomic scope" value="Bacteria"/>
</dbReference>
<dbReference type="HOGENOM" id="CLU_027420_3_1_5"/>
<dbReference type="UniPathway" id="UPA00074">
    <property type="reaction ID" value="UER00125"/>
</dbReference>
<dbReference type="Proteomes" id="UP000000552">
    <property type="component" value="Chromosome"/>
</dbReference>
<dbReference type="GO" id="GO:0005524">
    <property type="term" value="F:ATP binding"/>
    <property type="evidence" value="ECO:0007669"/>
    <property type="project" value="UniProtKB-KW"/>
</dbReference>
<dbReference type="GO" id="GO:0046872">
    <property type="term" value="F:metal ion binding"/>
    <property type="evidence" value="ECO:0007669"/>
    <property type="project" value="UniProtKB-KW"/>
</dbReference>
<dbReference type="GO" id="GO:0004637">
    <property type="term" value="F:phosphoribosylamine-glycine ligase activity"/>
    <property type="evidence" value="ECO:0007669"/>
    <property type="project" value="UniProtKB-UniRule"/>
</dbReference>
<dbReference type="GO" id="GO:0006189">
    <property type="term" value="P:'de novo' IMP biosynthetic process"/>
    <property type="evidence" value="ECO:0007669"/>
    <property type="project" value="UniProtKB-UniRule"/>
</dbReference>
<dbReference type="GO" id="GO:0009113">
    <property type="term" value="P:purine nucleobase biosynthetic process"/>
    <property type="evidence" value="ECO:0007669"/>
    <property type="project" value="InterPro"/>
</dbReference>
<dbReference type="FunFam" id="3.40.50.20:FF:000006">
    <property type="entry name" value="Phosphoribosylamine--glycine ligase, chloroplastic"/>
    <property type="match status" value="1"/>
</dbReference>
<dbReference type="FunFam" id="3.30.470.20:FF:000018">
    <property type="entry name" value="Trifunctional purine biosynthetic protein adenosine-3"/>
    <property type="match status" value="1"/>
</dbReference>
<dbReference type="FunFam" id="3.90.600.10:FF:000001">
    <property type="entry name" value="Trifunctional purine biosynthetic protein adenosine-3"/>
    <property type="match status" value="1"/>
</dbReference>
<dbReference type="Gene3D" id="3.40.50.20">
    <property type="match status" value="1"/>
</dbReference>
<dbReference type="Gene3D" id="3.30.1490.20">
    <property type="entry name" value="ATP-grasp fold, A domain"/>
    <property type="match status" value="1"/>
</dbReference>
<dbReference type="Gene3D" id="3.30.470.20">
    <property type="entry name" value="ATP-grasp fold, B domain"/>
    <property type="match status" value="1"/>
</dbReference>
<dbReference type="Gene3D" id="3.90.600.10">
    <property type="entry name" value="Phosphoribosylglycinamide synthetase, C-terminal domain"/>
    <property type="match status" value="1"/>
</dbReference>
<dbReference type="HAMAP" id="MF_00138">
    <property type="entry name" value="GARS"/>
    <property type="match status" value="1"/>
</dbReference>
<dbReference type="InterPro" id="IPR011761">
    <property type="entry name" value="ATP-grasp"/>
</dbReference>
<dbReference type="InterPro" id="IPR013815">
    <property type="entry name" value="ATP_grasp_subdomain_1"/>
</dbReference>
<dbReference type="InterPro" id="IPR016185">
    <property type="entry name" value="PreATP-grasp_dom_sf"/>
</dbReference>
<dbReference type="InterPro" id="IPR020561">
    <property type="entry name" value="PRibGlycinamid_synth_ATP-grasp"/>
</dbReference>
<dbReference type="InterPro" id="IPR000115">
    <property type="entry name" value="PRibGlycinamide_synth"/>
</dbReference>
<dbReference type="InterPro" id="IPR020560">
    <property type="entry name" value="PRibGlycinamide_synth_C-dom"/>
</dbReference>
<dbReference type="InterPro" id="IPR037123">
    <property type="entry name" value="PRibGlycinamide_synth_C_sf"/>
</dbReference>
<dbReference type="InterPro" id="IPR020559">
    <property type="entry name" value="PRibGlycinamide_synth_CS"/>
</dbReference>
<dbReference type="InterPro" id="IPR020562">
    <property type="entry name" value="PRibGlycinamide_synth_N"/>
</dbReference>
<dbReference type="InterPro" id="IPR011054">
    <property type="entry name" value="Rudment_hybrid_motif"/>
</dbReference>
<dbReference type="NCBIfam" id="TIGR00877">
    <property type="entry name" value="purD"/>
    <property type="match status" value="1"/>
</dbReference>
<dbReference type="PANTHER" id="PTHR43472">
    <property type="entry name" value="PHOSPHORIBOSYLAMINE--GLYCINE LIGASE"/>
    <property type="match status" value="1"/>
</dbReference>
<dbReference type="PANTHER" id="PTHR43472:SF1">
    <property type="entry name" value="PHOSPHORIBOSYLAMINE--GLYCINE LIGASE, CHLOROPLASTIC"/>
    <property type="match status" value="1"/>
</dbReference>
<dbReference type="Pfam" id="PF01071">
    <property type="entry name" value="GARS_A"/>
    <property type="match status" value="1"/>
</dbReference>
<dbReference type="Pfam" id="PF02843">
    <property type="entry name" value="GARS_C"/>
    <property type="match status" value="1"/>
</dbReference>
<dbReference type="Pfam" id="PF02844">
    <property type="entry name" value="GARS_N"/>
    <property type="match status" value="1"/>
</dbReference>
<dbReference type="SMART" id="SM01209">
    <property type="entry name" value="GARS_A"/>
    <property type="match status" value="1"/>
</dbReference>
<dbReference type="SMART" id="SM01210">
    <property type="entry name" value="GARS_C"/>
    <property type="match status" value="1"/>
</dbReference>
<dbReference type="SUPFAM" id="SSF56059">
    <property type="entry name" value="Glutathione synthetase ATP-binding domain-like"/>
    <property type="match status" value="1"/>
</dbReference>
<dbReference type="SUPFAM" id="SSF52440">
    <property type="entry name" value="PreATP-grasp domain"/>
    <property type="match status" value="1"/>
</dbReference>
<dbReference type="SUPFAM" id="SSF51246">
    <property type="entry name" value="Rudiment single hybrid motif"/>
    <property type="match status" value="1"/>
</dbReference>
<dbReference type="PROSITE" id="PS50975">
    <property type="entry name" value="ATP_GRASP"/>
    <property type="match status" value="1"/>
</dbReference>
<dbReference type="PROSITE" id="PS00184">
    <property type="entry name" value="GARS"/>
    <property type="match status" value="1"/>
</dbReference>
<name>PUR2_RHILO</name>